<sequence>MPLRSTFTRFFAMEAASGLLLIAAAILALIINNSPLSWLYNGLLETPVVAQVGALKIAKPLLLWINDGLMALFFLLIGLEVKREVLEGQLAKPSQIVLPGAAAIGGMLVPALIYWFLNRDNPPALNGWAIPTATDIAFALGVLALLGKRVPTSLKLFLMTLAIIDDLGAIVIIAIFYSGTLSTLSLMLAGACIAALVAMNRMGVVKLGPYMIIGLILWVCVLKSGVHATLAGVTLAFCIPLRTRNAEPSPLKALEHALHPWVSFGILPLFAFANAGLSLSGVTLESFTHHVPMGIAVGLLLGKTIGVFGLTWMAVKTGIAALPSGANWGQVLGVAILCGIGFTMSLFVGSLAFEPGSSEYAGMDRMGILTGSLFAALIGYAVTAAASRRNNTLAS</sequence>
<proteinExistence type="inferred from homology"/>
<accession>Q4KH68</accession>
<gene>
    <name evidence="1" type="primary">nhaA</name>
    <name type="ordered locus">PFL_1286</name>
</gene>
<keyword id="KW-0050">Antiport</keyword>
<keyword id="KW-0997">Cell inner membrane</keyword>
<keyword id="KW-1003">Cell membrane</keyword>
<keyword id="KW-0406">Ion transport</keyword>
<keyword id="KW-0472">Membrane</keyword>
<keyword id="KW-0915">Sodium</keyword>
<keyword id="KW-0739">Sodium transport</keyword>
<keyword id="KW-0812">Transmembrane</keyword>
<keyword id="KW-1133">Transmembrane helix</keyword>
<keyword id="KW-0813">Transport</keyword>
<feature type="chain" id="PRO_0000334368" description="Na(+)/H(+) antiporter NhaA">
    <location>
        <begin position="1"/>
        <end position="395"/>
    </location>
</feature>
<feature type="transmembrane region" description="Helical" evidence="1">
    <location>
        <begin position="11"/>
        <end position="31"/>
    </location>
</feature>
<feature type="transmembrane region" description="Helical" evidence="1">
    <location>
        <begin position="61"/>
        <end position="81"/>
    </location>
</feature>
<feature type="transmembrane region" description="Helical" evidence="1">
    <location>
        <begin position="96"/>
        <end position="116"/>
    </location>
</feature>
<feature type="transmembrane region" description="Helical" evidence="1">
    <location>
        <begin position="127"/>
        <end position="147"/>
    </location>
</feature>
<feature type="transmembrane region" description="Helical" evidence="1">
    <location>
        <begin position="156"/>
        <end position="176"/>
    </location>
</feature>
<feature type="transmembrane region" description="Helical" evidence="1">
    <location>
        <begin position="179"/>
        <end position="199"/>
    </location>
</feature>
<feature type="transmembrane region" description="Helical" evidence="1">
    <location>
        <begin position="202"/>
        <end position="222"/>
    </location>
</feature>
<feature type="transmembrane region" description="Helical" evidence="1">
    <location>
        <begin position="264"/>
        <end position="284"/>
    </location>
</feature>
<feature type="transmembrane region" description="Helical" evidence="1">
    <location>
        <begin position="295"/>
        <end position="315"/>
    </location>
</feature>
<feature type="transmembrane region" description="Helical" evidence="1">
    <location>
        <begin position="331"/>
        <end position="351"/>
    </location>
</feature>
<feature type="transmembrane region" description="Helical" evidence="1">
    <location>
        <begin position="366"/>
        <end position="386"/>
    </location>
</feature>
<reference key="1">
    <citation type="journal article" date="2005" name="Nat. Biotechnol.">
        <title>Complete genome sequence of the plant commensal Pseudomonas fluorescens Pf-5.</title>
        <authorList>
            <person name="Paulsen I.T."/>
            <person name="Press C.M."/>
            <person name="Ravel J."/>
            <person name="Kobayashi D.Y."/>
            <person name="Myers G.S.A."/>
            <person name="Mavrodi D.V."/>
            <person name="DeBoy R.T."/>
            <person name="Seshadri R."/>
            <person name="Ren Q."/>
            <person name="Madupu R."/>
            <person name="Dodson R.J."/>
            <person name="Durkin A.S."/>
            <person name="Brinkac L.M."/>
            <person name="Daugherty S.C."/>
            <person name="Sullivan S.A."/>
            <person name="Rosovitz M.J."/>
            <person name="Gwinn M.L."/>
            <person name="Zhou L."/>
            <person name="Schneider D.J."/>
            <person name="Cartinhour S.W."/>
            <person name="Nelson W.C."/>
            <person name="Weidman J."/>
            <person name="Watkins K."/>
            <person name="Tran K."/>
            <person name="Khouri H."/>
            <person name="Pierson E.A."/>
            <person name="Pierson L.S. III"/>
            <person name="Thomashow L.S."/>
            <person name="Loper J.E."/>
        </authorList>
    </citation>
    <scope>NUCLEOTIDE SEQUENCE [LARGE SCALE GENOMIC DNA]</scope>
    <source>
        <strain>ATCC BAA-477 / NRRL B-23932 / Pf-5</strain>
    </source>
</reference>
<organism>
    <name type="scientific">Pseudomonas fluorescens (strain ATCC BAA-477 / NRRL B-23932 / Pf-5)</name>
    <dbReference type="NCBI Taxonomy" id="220664"/>
    <lineage>
        <taxon>Bacteria</taxon>
        <taxon>Pseudomonadati</taxon>
        <taxon>Pseudomonadota</taxon>
        <taxon>Gammaproteobacteria</taxon>
        <taxon>Pseudomonadales</taxon>
        <taxon>Pseudomonadaceae</taxon>
        <taxon>Pseudomonas</taxon>
    </lineage>
</organism>
<protein>
    <recommendedName>
        <fullName evidence="1">Na(+)/H(+) antiporter NhaA</fullName>
    </recommendedName>
    <alternativeName>
        <fullName evidence="1">Sodium/proton antiporter NhaA</fullName>
    </alternativeName>
</protein>
<dbReference type="EMBL" id="CP000076">
    <property type="protein sequence ID" value="AAY90571.1"/>
    <property type="molecule type" value="Genomic_DNA"/>
</dbReference>
<dbReference type="RefSeq" id="WP_011059628.1">
    <property type="nucleotide sequence ID" value="NC_004129.6"/>
</dbReference>
<dbReference type="SMR" id="Q4KH68"/>
<dbReference type="STRING" id="220664.PFL_1286"/>
<dbReference type="KEGG" id="pfl:PFL_1286"/>
<dbReference type="PATRIC" id="fig|220664.5.peg.1317"/>
<dbReference type="eggNOG" id="COG3004">
    <property type="taxonomic scope" value="Bacteria"/>
</dbReference>
<dbReference type="HOGENOM" id="CLU_015803_1_0_6"/>
<dbReference type="Proteomes" id="UP000008540">
    <property type="component" value="Chromosome"/>
</dbReference>
<dbReference type="GO" id="GO:0005886">
    <property type="term" value="C:plasma membrane"/>
    <property type="evidence" value="ECO:0007669"/>
    <property type="project" value="UniProtKB-SubCell"/>
</dbReference>
<dbReference type="GO" id="GO:0015385">
    <property type="term" value="F:sodium:proton antiporter activity"/>
    <property type="evidence" value="ECO:0007669"/>
    <property type="project" value="TreeGrafter"/>
</dbReference>
<dbReference type="GO" id="GO:0006885">
    <property type="term" value="P:regulation of pH"/>
    <property type="evidence" value="ECO:0007669"/>
    <property type="project" value="InterPro"/>
</dbReference>
<dbReference type="Gene3D" id="1.20.1530.10">
    <property type="entry name" value="Na+/H+ antiporter like domain"/>
    <property type="match status" value="1"/>
</dbReference>
<dbReference type="HAMAP" id="MF_01844">
    <property type="entry name" value="NhaA"/>
    <property type="match status" value="1"/>
</dbReference>
<dbReference type="InterPro" id="IPR023171">
    <property type="entry name" value="Na/H_antiporter_dom_sf"/>
</dbReference>
<dbReference type="InterPro" id="IPR004670">
    <property type="entry name" value="NhaA"/>
</dbReference>
<dbReference type="NCBIfam" id="TIGR00773">
    <property type="entry name" value="NhaA"/>
    <property type="match status" value="1"/>
</dbReference>
<dbReference type="NCBIfam" id="NF007111">
    <property type="entry name" value="PRK09560.1"/>
    <property type="match status" value="1"/>
</dbReference>
<dbReference type="NCBIfam" id="NF007112">
    <property type="entry name" value="PRK09561.1"/>
    <property type="match status" value="1"/>
</dbReference>
<dbReference type="PANTHER" id="PTHR30341:SF0">
    <property type="entry name" value="NA(+)_H(+) ANTIPORTER NHAA"/>
    <property type="match status" value="1"/>
</dbReference>
<dbReference type="PANTHER" id="PTHR30341">
    <property type="entry name" value="SODIUM ION/PROTON ANTIPORTER NHAA-RELATED"/>
    <property type="match status" value="1"/>
</dbReference>
<dbReference type="Pfam" id="PF06965">
    <property type="entry name" value="Na_H_antiport_1"/>
    <property type="match status" value="1"/>
</dbReference>
<comment type="function">
    <text evidence="1">Na(+)/H(+) antiporter that extrudes sodium in exchange for external protons.</text>
</comment>
<comment type="catalytic activity">
    <reaction evidence="1">
        <text>Na(+)(in) + 2 H(+)(out) = Na(+)(out) + 2 H(+)(in)</text>
        <dbReference type="Rhea" id="RHEA:29251"/>
        <dbReference type="ChEBI" id="CHEBI:15378"/>
        <dbReference type="ChEBI" id="CHEBI:29101"/>
    </reaction>
    <physiologicalReaction direction="left-to-right" evidence="1">
        <dbReference type="Rhea" id="RHEA:29252"/>
    </physiologicalReaction>
</comment>
<comment type="subcellular location">
    <subcellularLocation>
        <location evidence="1">Cell inner membrane</location>
        <topology evidence="1">Multi-pass membrane protein</topology>
    </subcellularLocation>
</comment>
<comment type="similarity">
    <text evidence="1">Belongs to the NhaA Na(+)/H(+) (TC 2.A.33) antiporter family.</text>
</comment>
<name>NHAA_PSEF5</name>
<evidence type="ECO:0000255" key="1">
    <source>
        <dbReference type="HAMAP-Rule" id="MF_01844"/>
    </source>
</evidence>